<comment type="function">
    <text evidence="1">Required for endonucleolytic cleavage during polyadenylation-dependent pre-mRNA 3'-end formation.</text>
</comment>
<comment type="subunit">
    <text evidence="1">Component of a pre-mRNA cleavage factor complex. Interacts directly with PCF11.</text>
</comment>
<comment type="subcellular location">
    <subcellularLocation>
        <location evidence="1">Nucleus</location>
    </subcellularLocation>
</comment>
<comment type="similarity">
    <text evidence="1">Belongs to the Clp1 family. Clp1 subfamily.</text>
</comment>
<comment type="caution">
    <text evidence="3">May lack the polyribonucleotide 5'-hydroxyl-kinase and polynucleotide 5'-hydroxyl-kinase activities that are characteristic of the human ortholog.</text>
</comment>
<accession>A2RAW3</accession>
<reference key="1">
    <citation type="journal article" date="2007" name="Nat. Biotechnol.">
        <title>Genome sequencing and analysis of the versatile cell factory Aspergillus niger CBS 513.88.</title>
        <authorList>
            <person name="Pel H.J."/>
            <person name="de Winde J.H."/>
            <person name="Archer D.B."/>
            <person name="Dyer P.S."/>
            <person name="Hofmann G."/>
            <person name="Schaap P.J."/>
            <person name="Turner G."/>
            <person name="de Vries R.P."/>
            <person name="Albang R."/>
            <person name="Albermann K."/>
            <person name="Andersen M.R."/>
            <person name="Bendtsen J.D."/>
            <person name="Benen J.A.E."/>
            <person name="van den Berg M."/>
            <person name="Breestraat S."/>
            <person name="Caddick M.X."/>
            <person name="Contreras R."/>
            <person name="Cornell M."/>
            <person name="Coutinho P.M."/>
            <person name="Danchin E.G.J."/>
            <person name="Debets A.J.M."/>
            <person name="Dekker P."/>
            <person name="van Dijck P.W.M."/>
            <person name="van Dijk A."/>
            <person name="Dijkhuizen L."/>
            <person name="Driessen A.J.M."/>
            <person name="d'Enfert C."/>
            <person name="Geysens S."/>
            <person name="Goosen C."/>
            <person name="Groot G.S.P."/>
            <person name="de Groot P.W.J."/>
            <person name="Guillemette T."/>
            <person name="Henrissat B."/>
            <person name="Herweijer M."/>
            <person name="van den Hombergh J.P.T.W."/>
            <person name="van den Hondel C.A.M.J.J."/>
            <person name="van der Heijden R.T.J.M."/>
            <person name="van der Kaaij R.M."/>
            <person name="Klis F.M."/>
            <person name="Kools H.J."/>
            <person name="Kubicek C.P."/>
            <person name="van Kuyk P.A."/>
            <person name="Lauber J."/>
            <person name="Lu X."/>
            <person name="van der Maarel M.J.E.C."/>
            <person name="Meulenberg R."/>
            <person name="Menke H."/>
            <person name="Mortimer M.A."/>
            <person name="Nielsen J."/>
            <person name="Oliver S.G."/>
            <person name="Olsthoorn M."/>
            <person name="Pal K."/>
            <person name="van Peij N.N.M.E."/>
            <person name="Ram A.F.J."/>
            <person name="Rinas U."/>
            <person name="Roubos J.A."/>
            <person name="Sagt C.M.J."/>
            <person name="Schmoll M."/>
            <person name="Sun J."/>
            <person name="Ussery D."/>
            <person name="Varga J."/>
            <person name="Vervecken W."/>
            <person name="van de Vondervoort P.J.J."/>
            <person name="Wedler H."/>
            <person name="Woesten H.A.B."/>
            <person name="Zeng A.-P."/>
            <person name="van Ooyen A.J.J."/>
            <person name="Visser J."/>
            <person name="Stam H."/>
        </authorList>
    </citation>
    <scope>NUCLEOTIDE SEQUENCE [LARGE SCALE GENOMIC DNA]</scope>
    <source>
        <strain>ATCC MYA-4892 / CBS 513.88 / FGSC A1513</strain>
    </source>
</reference>
<proteinExistence type="inferred from homology"/>
<name>CLP1_ASPNC</name>
<keyword id="KW-0067">ATP-binding</keyword>
<keyword id="KW-0507">mRNA processing</keyword>
<keyword id="KW-0547">Nucleotide-binding</keyword>
<keyword id="KW-0539">Nucleus</keyword>
<keyword id="KW-1185">Reference proteome</keyword>
<gene>
    <name type="primary">clp1</name>
    <name type="ORF">An18g04570</name>
</gene>
<organism>
    <name type="scientific">Aspergillus niger (strain ATCC MYA-4892 / CBS 513.88 / FGSC A1513)</name>
    <dbReference type="NCBI Taxonomy" id="425011"/>
    <lineage>
        <taxon>Eukaryota</taxon>
        <taxon>Fungi</taxon>
        <taxon>Dikarya</taxon>
        <taxon>Ascomycota</taxon>
        <taxon>Pezizomycotina</taxon>
        <taxon>Eurotiomycetes</taxon>
        <taxon>Eurotiomycetidae</taxon>
        <taxon>Eurotiales</taxon>
        <taxon>Aspergillaceae</taxon>
        <taxon>Aspergillus</taxon>
        <taxon>Aspergillus subgen. Circumdati</taxon>
    </lineage>
</organism>
<evidence type="ECO:0000255" key="1">
    <source>
        <dbReference type="HAMAP-Rule" id="MF_03035"/>
    </source>
</evidence>
<evidence type="ECO:0000256" key="2">
    <source>
        <dbReference type="SAM" id="MobiDB-lite"/>
    </source>
</evidence>
<evidence type="ECO:0000305" key="3"/>
<dbReference type="EMBL" id="AM270408">
    <property type="protein sequence ID" value="CAK43259.1"/>
    <property type="molecule type" value="Genomic_DNA"/>
</dbReference>
<dbReference type="SMR" id="A2RAW3"/>
<dbReference type="EnsemblFungi" id="CAK43259">
    <property type="protein sequence ID" value="CAK43259"/>
    <property type="gene ID" value="An18g04570"/>
</dbReference>
<dbReference type="VEuPathDB" id="FungiDB:An18g04570"/>
<dbReference type="HOGENOM" id="CLU_018195_3_1_1"/>
<dbReference type="Proteomes" id="UP000006706">
    <property type="component" value="Chromosome 8L"/>
</dbReference>
<dbReference type="GO" id="GO:0005849">
    <property type="term" value="C:mRNA cleavage factor complex"/>
    <property type="evidence" value="ECO:0007669"/>
    <property type="project" value="UniProtKB-UniRule"/>
</dbReference>
<dbReference type="GO" id="GO:0005524">
    <property type="term" value="F:ATP binding"/>
    <property type="evidence" value="ECO:0007669"/>
    <property type="project" value="UniProtKB-UniRule"/>
</dbReference>
<dbReference type="GO" id="GO:0051731">
    <property type="term" value="F:polynucleotide 5'-hydroxyl-kinase activity"/>
    <property type="evidence" value="ECO:0007669"/>
    <property type="project" value="InterPro"/>
</dbReference>
<dbReference type="GO" id="GO:0031124">
    <property type="term" value="P:mRNA 3'-end processing"/>
    <property type="evidence" value="ECO:0007669"/>
    <property type="project" value="UniProtKB-UniRule"/>
</dbReference>
<dbReference type="GO" id="GO:0006388">
    <property type="term" value="P:tRNA splicing, via endonucleolytic cleavage and ligation"/>
    <property type="evidence" value="ECO:0007669"/>
    <property type="project" value="TreeGrafter"/>
</dbReference>
<dbReference type="FunFam" id="3.40.50.300:FF:002095">
    <property type="entry name" value="mRNA cleavage and polyadenylation factor clp1"/>
    <property type="match status" value="1"/>
</dbReference>
<dbReference type="FunFam" id="2.60.120.1030:FF:000001">
    <property type="entry name" value="Protein CLP1 homolog 5"/>
    <property type="match status" value="1"/>
</dbReference>
<dbReference type="Gene3D" id="2.60.120.1030">
    <property type="entry name" value="Clp1, DNA binding domain"/>
    <property type="match status" value="1"/>
</dbReference>
<dbReference type="Gene3D" id="3.40.50.300">
    <property type="entry name" value="P-loop containing nucleotide triphosphate hydrolases"/>
    <property type="match status" value="1"/>
</dbReference>
<dbReference type="Gene3D" id="2.40.30.330">
    <property type="entry name" value="Pre-mRNA cleavage complex subunit Clp1, C-terminal domain"/>
    <property type="match status" value="1"/>
</dbReference>
<dbReference type="HAMAP" id="MF_03035">
    <property type="entry name" value="Clp1"/>
    <property type="match status" value="1"/>
</dbReference>
<dbReference type="InterPro" id="IPR028606">
    <property type="entry name" value="Clp1"/>
</dbReference>
<dbReference type="InterPro" id="IPR045116">
    <property type="entry name" value="Clp1/Grc3"/>
</dbReference>
<dbReference type="InterPro" id="IPR010655">
    <property type="entry name" value="Clp1_C"/>
</dbReference>
<dbReference type="InterPro" id="IPR038238">
    <property type="entry name" value="Clp1_C_sf"/>
</dbReference>
<dbReference type="InterPro" id="IPR032324">
    <property type="entry name" value="Clp1_N"/>
</dbReference>
<dbReference type="InterPro" id="IPR038239">
    <property type="entry name" value="Clp1_N_sf"/>
</dbReference>
<dbReference type="InterPro" id="IPR032319">
    <property type="entry name" value="CLP1_P"/>
</dbReference>
<dbReference type="InterPro" id="IPR027417">
    <property type="entry name" value="P-loop_NTPase"/>
</dbReference>
<dbReference type="PANTHER" id="PTHR12755">
    <property type="entry name" value="CLEAVAGE/POLYADENYLATION FACTOR IA SUBUNIT CLP1P"/>
    <property type="match status" value="1"/>
</dbReference>
<dbReference type="PANTHER" id="PTHR12755:SF6">
    <property type="entry name" value="POLYRIBONUCLEOTIDE 5'-HYDROXYL-KINASE CLP1"/>
    <property type="match status" value="1"/>
</dbReference>
<dbReference type="Pfam" id="PF06807">
    <property type="entry name" value="Clp1"/>
    <property type="match status" value="1"/>
</dbReference>
<dbReference type="Pfam" id="PF16573">
    <property type="entry name" value="CLP1_N"/>
    <property type="match status" value="1"/>
</dbReference>
<dbReference type="Pfam" id="PF16575">
    <property type="entry name" value="CLP1_P"/>
    <property type="match status" value="1"/>
</dbReference>
<dbReference type="SUPFAM" id="SSF52540">
    <property type="entry name" value="P-loop containing nucleoside triphosphate hydrolases"/>
    <property type="match status" value="1"/>
</dbReference>
<protein>
    <recommendedName>
        <fullName evidence="1">mRNA cleavage and polyadenylation factor clp1</fullName>
    </recommendedName>
</protein>
<feature type="chain" id="PRO_0000375195" description="mRNA cleavage and polyadenylation factor clp1">
    <location>
        <begin position="1"/>
        <end position="477"/>
    </location>
</feature>
<feature type="region of interest" description="Disordered" evidence="2">
    <location>
        <begin position="1"/>
        <end position="23"/>
    </location>
</feature>
<feature type="binding site" evidence="1">
    <location>
        <position position="32"/>
    </location>
    <ligand>
        <name>ATP</name>
        <dbReference type="ChEBI" id="CHEBI:30616"/>
    </ligand>
</feature>
<feature type="binding site" evidence="1">
    <location>
        <position position="71"/>
    </location>
    <ligand>
        <name>ATP</name>
        <dbReference type="ChEBI" id="CHEBI:30616"/>
    </ligand>
</feature>
<feature type="binding site" evidence="1">
    <location>
        <begin position="127"/>
        <end position="132"/>
    </location>
    <ligand>
        <name>ATP</name>
        <dbReference type="ChEBI" id="CHEBI:30616"/>
    </ligand>
</feature>
<sequence>MSLPGLDLTQPSADREFAPAPPSQISLPKGSEWRFEVAFGTTVRVKLLAGTAELFGTELAPSQTYTFSGTKAAIYTWHGCTLESEYVAEETPMVEYANVHFALETLRQEAKATGKDGPRVLILGPEDAGKTSLSKILTAYATKVGRQPLVVNLDPTEGMLSVPGTLTATAFRTMIDVEEGWGSSPMSGPSAVPVKLPLVYFYPMQNPLEADGSVYKAIVSRLALSVTGRMAEDEDARETGIIVDTPGILSQSKAGNVEMINHIVTEFAITTILVIGSERLYSIMMKNFDNKPTASASAAASDERISVVKLSKSGGCVDRDAAFMKAVSESQIRTYFFGNPIPSTASAALSLSASSTTNVTLSPHAQQLDFNALAVYNYTIASAEEDEDEYDPSQLGTGDAFLPGGSNDVDLALANSLLAITHASSTASPADVRDASIMGFLYVADVDAEKGKIRVLAPVGGRVPPRAIKKYIDSSKV</sequence>